<reference key="1">
    <citation type="journal article" date="2006" name="Mol. Microbiol.">
        <title>Role of pathogenicity island-associated integrases in the genome plasticity of uropathogenic Escherichia coli strain 536.</title>
        <authorList>
            <person name="Hochhut B."/>
            <person name="Wilde C."/>
            <person name="Balling G."/>
            <person name="Middendorf B."/>
            <person name="Dobrindt U."/>
            <person name="Brzuszkiewicz E."/>
            <person name="Gottschalk G."/>
            <person name="Carniel E."/>
            <person name="Hacker J."/>
        </authorList>
    </citation>
    <scope>NUCLEOTIDE SEQUENCE [LARGE SCALE GENOMIC DNA]</scope>
    <source>
        <strain>536 / UPEC</strain>
    </source>
</reference>
<organism>
    <name type="scientific">Escherichia coli O6:K15:H31 (strain 536 / UPEC)</name>
    <dbReference type="NCBI Taxonomy" id="362663"/>
    <lineage>
        <taxon>Bacteria</taxon>
        <taxon>Pseudomonadati</taxon>
        <taxon>Pseudomonadota</taxon>
        <taxon>Gammaproteobacteria</taxon>
        <taxon>Enterobacterales</taxon>
        <taxon>Enterobacteriaceae</taxon>
        <taxon>Escherichia</taxon>
    </lineage>
</organism>
<accession>Q0T9N7</accession>
<proteinExistence type="inferred from homology"/>
<gene>
    <name evidence="1" type="primary">frdC</name>
    <name type="ordered locus">ECP_4398</name>
</gene>
<feature type="chain" id="PRO_1000045524" description="Fumarate reductase subunit C">
    <location>
        <begin position="1"/>
        <end position="131"/>
    </location>
</feature>
<feature type="transmembrane region" description="Helical" evidence="1">
    <location>
        <begin position="30"/>
        <end position="50"/>
    </location>
</feature>
<feature type="transmembrane region" description="Helical" evidence="1">
    <location>
        <begin position="63"/>
        <end position="83"/>
    </location>
</feature>
<feature type="transmembrane region" description="Helical" evidence="1">
    <location>
        <begin position="109"/>
        <end position="129"/>
    </location>
</feature>
<name>FRDC_ECOL5</name>
<keyword id="KW-0997">Cell inner membrane</keyword>
<keyword id="KW-1003">Cell membrane</keyword>
<keyword id="KW-0472">Membrane</keyword>
<keyword id="KW-0812">Transmembrane</keyword>
<keyword id="KW-1133">Transmembrane helix</keyword>
<sequence>MTTKRKPYVRPMTSTWWKKLPFYRFYMLREGTAVPAVWFSIELIFGLFALKNGPEAWAGFVDFLQNPVIVIINLITLAAALLHTKTWFELAPKAANIIVKDEKMGPEPIIKSLWAVTVVATIVILFVALYW</sequence>
<dbReference type="EMBL" id="CP000247">
    <property type="protein sequence ID" value="ABG72342.1"/>
    <property type="molecule type" value="Genomic_DNA"/>
</dbReference>
<dbReference type="RefSeq" id="WP_000208757.1">
    <property type="nucleotide sequence ID" value="NC_008253.1"/>
</dbReference>
<dbReference type="SMR" id="Q0T9N7"/>
<dbReference type="GeneID" id="93777670"/>
<dbReference type="KEGG" id="ecp:ECP_4398"/>
<dbReference type="HOGENOM" id="CLU_156492_0_0_6"/>
<dbReference type="Proteomes" id="UP000009182">
    <property type="component" value="Chromosome"/>
</dbReference>
<dbReference type="GO" id="GO:0045283">
    <property type="term" value="C:fumarate reductase complex"/>
    <property type="evidence" value="ECO:0007669"/>
    <property type="project" value="UniProtKB-UniRule"/>
</dbReference>
<dbReference type="GO" id="GO:0005886">
    <property type="term" value="C:plasma membrane"/>
    <property type="evidence" value="ECO:0007669"/>
    <property type="project" value="UniProtKB-SubCell"/>
</dbReference>
<dbReference type="GO" id="GO:0000104">
    <property type="term" value="F:succinate dehydrogenase activity"/>
    <property type="evidence" value="ECO:0007669"/>
    <property type="project" value="UniProtKB-UniRule"/>
</dbReference>
<dbReference type="CDD" id="cd00546">
    <property type="entry name" value="QFR_TypeD_subunitC"/>
    <property type="match status" value="1"/>
</dbReference>
<dbReference type="FunFam" id="1.20.1300.10:FF:000003">
    <property type="entry name" value="Fumarate reductase subunit C"/>
    <property type="match status" value="1"/>
</dbReference>
<dbReference type="Gene3D" id="1.20.1300.10">
    <property type="entry name" value="Fumarate reductase/succinate dehydrogenase, transmembrane subunit"/>
    <property type="match status" value="1"/>
</dbReference>
<dbReference type="HAMAP" id="MF_00708">
    <property type="entry name" value="Fumarate_red_C"/>
    <property type="match status" value="1"/>
</dbReference>
<dbReference type="InterPro" id="IPR003510">
    <property type="entry name" value="Fumarate_red_C"/>
</dbReference>
<dbReference type="InterPro" id="IPR034804">
    <property type="entry name" value="SQR/QFR_C/D"/>
</dbReference>
<dbReference type="NCBIfam" id="NF003445">
    <property type="entry name" value="PRK04987.1"/>
    <property type="match status" value="1"/>
</dbReference>
<dbReference type="Pfam" id="PF02300">
    <property type="entry name" value="Fumarate_red_C"/>
    <property type="match status" value="1"/>
</dbReference>
<dbReference type="PIRSF" id="PIRSF000180">
    <property type="entry name" value="FrdC"/>
    <property type="match status" value="1"/>
</dbReference>
<dbReference type="SUPFAM" id="SSF81343">
    <property type="entry name" value="Fumarate reductase respiratory complex transmembrane subunits"/>
    <property type="match status" value="1"/>
</dbReference>
<evidence type="ECO:0000255" key="1">
    <source>
        <dbReference type="HAMAP-Rule" id="MF_00708"/>
    </source>
</evidence>
<comment type="function">
    <text evidence="1">Two distinct, membrane-bound, FAD-containing enzymes are responsible for the catalysis of fumarate and succinate interconversion; fumarate reductase is used in anaerobic growth, and succinate dehydrogenase is used in aerobic growth. Anchors the catalytic components of the fumarate reductase complex to the cell inner membrane, binds quinones.</text>
</comment>
<comment type="subunit">
    <text evidence="1">Part of an enzyme complex containing four subunits: a flavoprotein (FrdA), an iron-sulfur protein (FrdB), and two hydrophobic anchor proteins (FrdC and FrdD).</text>
</comment>
<comment type="subcellular location">
    <subcellularLocation>
        <location evidence="1">Cell inner membrane</location>
        <topology evidence="1">Multi-pass membrane protein</topology>
    </subcellularLocation>
</comment>
<comment type="similarity">
    <text evidence="1">Belongs to the FrdC family.</text>
</comment>
<protein>
    <recommendedName>
        <fullName evidence="1">Fumarate reductase subunit C</fullName>
    </recommendedName>
    <alternativeName>
        <fullName evidence="1">Fumarate reductase 15 kDa hydrophobic protein</fullName>
    </alternativeName>
    <alternativeName>
        <fullName evidence="1">Quinol-fumarate reductase subunit C</fullName>
        <shortName evidence="1">QFR subunit C</shortName>
    </alternativeName>
</protein>